<sequence length="337" mass="35938">MRVLGIETSCDETGIAIYDDEKGLLANQLYSQVKLHADYGGVVPELASRDHVRKTVPLIQAALKESGLTAKEIDAVAYTAGPGLVGALLVGATVGRSLAFAWNVPAIPVHHMEGHLLAPMLEDNPPEFPFVALLVSGGHTQLISVTGIGQYALLGESIDDAAGEAFDKTAKLLGLDYPGGPMLSKMAAQGTAGRFVFPRPMTDRPGLDFSFSGLKTFAANTIRSNGDDEQTRADIARAFEDAVVDTLMIKCKRALDQTGFKRLVMAGGVSANRTLRAKLAEMMQKRRGEVFYARPEFCTDNGAMIAYAGMVRFKAGATADLGVSVLPRWPLAELPAA</sequence>
<accession>A8APV4</accession>
<evidence type="ECO:0000255" key="1">
    <source>
        <dbReference type="HAMAP-Rule" id="MF_01445"/>
    </source>
</evidence>
<proteinExistence type="inferred from homology"/>
<protein>
    <recommendedName>
        <fullName evidence="1">tRNA N6-adenosine threonylcarbamoyltransferase</fullName>
        <ecNumber evidence="1">2.3.1.234</ecNumber>
    </recommendedName>
    <alternativeName>
        <fullName evidence="1">N6-L-threonylcarbamoyladenine synthase</fullName>
        <shortName evidence="1">t(6)A synthase</shortName>
    </alternativeName>
    <alternativeName>
        <fullName evidence="1">t(6)A37 threonylcarbamoyladenosine biosynthesis protein TsaD</fullName>
    </alternativeName>
    <alternativeName>
        <fullName evidence="1">tRNA threonylcarbamoyladenosine biosynthesis protein TsaD</fullName>
    </alternativeName>
</protein>
<organism>
    <name type="scientific">Citrobacter koseri (strain ATCC BAA-895 / CDC 4225-83 / SGSC4696)</name>
    <dbReference type="NCBI Taxonomy" id="290338"/>
    <lineage>
        <taxon>Bacteria</taxon>
        <taxon>Pseudomonadati</taxon>
        <taxon>Pseudomonadota</taxon>
        <taxon>Gammaproteobacteria</taxon>
        <taxon>Enterobacterales</taxon>
        <taxon>Enterobacteriaceae</taxon>
        <taxon>Citrobacter</taxon>
    </lineage>
</organism>
<feature type="chain" id="PRO_1000024429" description="tRNA N6-adenosine threonylcarbamoyltransferase">
    <location>
        <begin position="1"/>
        <end position="337"/>
    </location>
</feature>
<feature type="binding site" evidence="1">
    <location>
        <position position="111"/>
    </location>
    <ligand>
        <name>Fe cation</name>
        <dbReference type="ChEBI" id="CHEBI:24875"/>
    </ligand>
</feature>
<feature type="binding site" evidence="1">
    <location>
        <position position="115"/>
    </location>
    <ligand>
        <name>Fe cation</name>
        <dbReference type="ChEBI" id="CHEBI:24875"/>
    </ligand>
</feature>
<feature type="binding site" evidence="1">
    <location>
        <begin position="134"/>
        <end position="138"/>
    </location>
    <ligand>
        <name>substrate</name>
    </ligand>
</feature>
<feature type="binding site" evidence="1">
    <location>
        <position position="167"/>
    </location>
    <ligand>
        <name>substrate</name>
    </ligand>
</feature>
<feature type="binding site" evidence="1">
    <location>
        <position position="180"/>
    </location>
    <ligand>
        <name>substrate</name>
    </ligand>
</feature>
<feature type="binding site" evidence="1">
    <location>
        <position position="272"/>
    </location>
    <ligand>
        <name>substrate</name>
    </ligand>
</feature>
<feature type="binding site" evidence="1">
    <location>
        <position position="300"/>
    </location>
    <ligand>
        <name>Fe cation</name>
        <dbReference type="ChEBI" id="CHEBI:24875"/>
    </ligand>
</feature>
<keyword id="KW-0012">Acyltransferase</keyword>
<keyword id="KW-0963">Cytoplasm</keyword>
<keyword id="KW-0408">Iron</keyword>
<keyword id="KW-0479">Metal-binding</keyword>
<keyword id="KW-1185">Reference proteome</keyword>
<keyword id="KW-0808">Transferase</keyword>
<keyword id="KW-0819">tRNA processing</keyword>
<reference key="1">
    <citation type="submission" date="2007-08" db="EMBL/GenBank/DDBJ databases">
        <authorList>
            <consortium name="The Citrobacter koseri Genome Sequencing Project"/>
            <person name="McClelland M."/>
            <person name="Sanderson E.K."/>
            <person name="Porwollik S."/>
            <person name="Spieth J."/>
            <person name="Clifton W.S."/>
            <person name="Latreille P."/>
            <person name="Courtney L."/>
            <person name="Wang C."/>
            <person name="Pepin K."/>
            <person name="Bhonagiri V."/>
            <person name="Nash W."/>
            <person name="Johnson M."/>
            <person name="Thiruvilangam P."/>
            <person name="Wilson R."/>
        </authorList>
    </citation>
    <scope>NUCLEOTIDE SEQUENCE [LARGE SCALE GENOMIC DNA]</scope>
    <source>
        <strain>ATCC BAA-895 / CDC 4225-83 / SGSC4696</strain>
    </source>
</reference>
<dbReference type="EC" id="2.3.1.234" evidence="1"/>
<dbReference type="EMBL" id="CP000822">
    <property type="protein sequence ID" value="ABV15517.1"/>
    <property type="molecule type" value="Genomic_DNA"/>
</dbReference>
<dbReference type="RefSeq" id="WP_012135200.1">
    <property type="nucleotide sequence ID" value="NC_009792.1"/>
</dbReference>
<dbReference type="SMR" id="A8APV4"/>
<dbReference type="STRING" id="290338.CKO_04461"/>
<dbReference type="GeneID" id="45138030"/>
<dbReference type="KEGG" id="cko:CKO_04461"/>
<dbReference type="HOGENOM" id="CLU_023208_0_0_6"/>
<dbReference type="OrthoDB" id="9806197at2"/>
<dbReference type="Proteomes" id="UP000008148">
    <property type="component" value="Chromosome"/>
</dbReference>
<dbReference type="GO" id="GO:0005737">
    <property type="term" value="C:cytoplasm"/>
    <property type="evidence" value="ECO:0007669"/>
    <property type="project" value="UniProtKB-SubCell"/>
</dbReference>
<dbReference type="GO" id="GO:0005506">
    <property type="term" value="F:iron ion binding"/>
    <property type="evidence" value="ECO:0007669"/>
    <property type="project" value="UniProtKB-UniRule"/>
</dbReference>
<dbReference type="GO" id="GO:0061711">
    <property type="term" value="F:N(6)-L-threonylcarbamoyladenine synthase activity"/>
    <property type="evidence" value="ECO:0007669"/>
    <property type="project" value="UniProtKB-EC"/>
</dbReference>
<dbReference type="GO" id="GO:0002949">
    <property type="term" value="P:tRNA threonylcarbamoyladenosine modification"/>
    <property type="evidence" value="ECO:0007669"/>
    <property type="project" value="UniProtKB-UniRule"/>
</dbReference>
<dbReference type="CDD" id="cd24097">
    <property type="entry name" value="ASKHA_NBD_TsaD-like"/>
    <property type="match status" value="1"/>
</dbReference>
<dbReference type="FunFam" id="3.30.420.40:FF:000031">
    <property type="entry name" value="tRNA N6-adenosine threonylcarbamoyltransferase"/>
    <property type="match status" value="1"/>
</dbReference>
<dbReference type="Gene3D" id="3.30.420.40">
    <property type="match status" value="2"/>
</dbReference>
<dbReference type="HAMAP" id="MF_01445">
    <property type="entry name" value="TsaD"/>
    <property type="match status" value="1"/>
</dbReference>
<dbReference type="InterPro" id="IPR043129">
    <property type="entry name" value="ATPase_NBD"/>
</dbReference>
<dbReference type="InterPro" id="IPR000905">
    <property type="entry name" value="Gcp-like_dom"/>
</dbReference>
<dbReference type="InterPro" id="IPR017861">
    <property type="entry name" value="KAE1/TsaD"/>
</dbReference>
<dbReference type="InterPro" id="IPR017860">
    <property type="entry name" value="Peptidase_M22_CS"/>
</dbReference>
<dbReference type="InterPro" id="IPR022450">
    <property type="entry name" value="TsaD"/>
</dbReference>
<dbReference type="NCBIfam" id="TIGR00329">
    <property type="entry name" value="gcp_kae1"/>
    <property type="match status" value="1"/>
</dbReference>
<dbReference type="NCBIfam" id="TIGR03723">
    <property type="entry name" value="T6A_TsaD_YgjD"/>
    <property type="match status" value="1"/>
</dbReference>
<dbReference type="PANTHER" id="PTHR11735">
    <property type="entry name" value="TRNA N6-ADENOSINE THREONYLCARBAMOYLTRANSFERASE"/>
    <property type="match status" value="1"/>
</dbReference>
<dbReference type="PANTHER" id="PTHR11735:SF6">
    <property type="entry name" value="TRNA N6-ADENOSINE THREONYLCARBAMOYLTRANSFERASE, MITOCHONDRIAL"/>
    <property type="match status" value="1"/>
</dbReference>
<dbReference type="Pfam" id="PF00814">
    <property type="entry name" value="TsaD"/>
    <property type="match status" value="1"/>
</dbReference>
<dbReference type="PRINTS" id="PR00789">
    <property type="entry name" value="OSIALOPTASE"/>
</dbReference>
<dbReference type="SUPFAM" id="SSF53067">
    <property type="entry name" value="Actin-like ATPase domain"/>
    <property type="match status" value="1"/>
</dbReference>
<dbReference type="PROSITE" id="PS01016">
    <property type="entry name" value="GLYCOPROTEASE"/>
    <property type="match status" value="1"/>
</dbReference>
<gene>
    <name evidence="1" type="primary">tsaD</name>
    <name type="synonym">gcp</name>
    <name type="ordered locus">CKO_04461</name>
</gene>
<name>TSAD_CITK8</name>
<comment type="function">
    <text evidence="1">Required for the formation of a threonylcarbamoyl group on adenosine at position 37 (t(6)A37) in tRNAs that read codons beginning with adenine. Is involved in the transfer of the threonylcarbamoyl moiety of threonylcarbamoyl-AMP (TC-AMP) to the N6 group of A37, together with TsaE and TsaB. TsaD likely plays a direct catalytic role in this reaction.</text>
</comment>
<comment type="catalytic activity">
    <reaction evidence="1">
        <text>L-threonylcarbamoyladenylate + adenosine(37) in tRNA = N(6)-L-threonylcarbamoyladenosine(37) in tRNA + AMP + H(+)</text>
        <dbReference type="Rhea" id="RHEA:37059"/>
        <dbReference type="Rhea" id="RHEA-COMP:10162"/>
        <dbReference type="Rhea" id="RHEA-COMP:10163"/>
        <dbReference type="ChEBI" id="CHEBI:15378"/>
        <dbReference type="ChEBI" id="CHEBI:73682"/>
        <dbReference type="ChEBI" id="CHEBI:74411"/>
        <dbReference type="ChEBI" id="CHEBI:74418"/>
        <dbReference type="ChEBI" id="CHEBI:456215"/>
        <dbReference type="EC" id="2.3.1.234"/>
    </reaction>
</comment>
<comment type="cofactor">
    <cofactor evidence="1">
        <name>Fe(2+)</name>
        <dbReference type="ChEBI" id="CHEBI:29033"/>
    </cofactor>
    <text evidence="1">Binds 1 Fe(2+) ion per subunit.</text>
</comment>
<comment type="subcellular location">
    <subcellularLocation>
        <location evidence="1">Cytoplasm</location>
    </subcellularLocation>
</comment>
<comment type="similarity">
    <text evidence="1">Belongs to the KAE1 / TsaD family.</text>
</comment>